<accession>B3QYE7</accession>
<protein>
    <recommendedName>
        <fullName evidence="1">Small ribosomal subunit protein uS13</fullName>
    </recommendedName>
    <alternativeName>
        <fullName evidence="3">30S ribosomal protein S13</fullName>
    </alternativeName>
</protein>
<comment type="function">
    <text evidence="1">Located at the top of the head of the 30S subunit, it contacts several helices of the 16S rRNA. In the 70S ribosome it contacts the 23S rRNA (bridge B1a) and protein L5 of the 50S subunit (bridge B1b), connecting the 2 subunits; these bridges are implicated in subunit movement. Contacts the tRNAs in the A and P-sites.</text>
</comment>
<comment type="subunit">
    <text evidence="1">Part of the 30S ribosomal subunit. Forms a loose heterodimer with protein S19. Forms two bridges to the 50S subunit in the 70S ribosome.</text>
</comment>
<comment type="similarity">
    <text evidence="1">Belongs to the universal ribosomal protein uS13 family.</text>
</comment>
<name>RS13_CHLT3</name>
<evidence type="ECO:0000255" key="1">
    <source>
        <dbReference type="HAMAP-Rule" id="MF_01315"/>
    </source>
</evidence>
<evidence type="ECO:0000256" key="2">
    <source>
        <dbReference type="SAM" id="MobiDB-lite"/>
    </source>
</evidence>
<evidence type="ECO:0000305" key="3"/>
<feature type="chain" id="PRO_1000141240" description="Small ribosomal subunit protein uS13">
    <location>
        <begin position="1"/>
        <end position="125"/>
    </location>
</feature>
<feature type="region of interest" description="Disordered" evidence="2">
    <location>
        <begin position="91"/>
        <end position="125"/>
    </location>
</feature>
<reference key="1">
    <citation type="submission" date="2008-06" db="EMBL/GenBank/DDBJ databases">
        <title>Complete sequence of Chloroherpeton thalassium ATCC 35110.</title>
        <authorList>
            <consortium name="US DOE Joint Genome Institute"/>
            <person name="Lucas S."/>
            <person name="Copeland A."/>
            <person name="Lapidus A."/>
            <person name="Glavina del Rio T."/>
            <person name="Dalin E."/>
            <person name="Tice H."/>
            <person name="Bruce D."/>
            <person name="Goodwin L."/>
            <person name="Pitluck S."/>
            <person name="Schmutz J."/>
            <person name="Larimer F."/>
            <person name="Land M."/>
            <person name="Hauser L."/>
            <person name="Kyrpides N."/>
            <person name="Mikhailova N."/>
            <person name="Liu Z."/>
            <person name="Li T."/>
            <person name="Zhao F."/>
            <person name="Overmann J."/>
            <person name="Bryant D.A."/>
            <person name="Richardson P."/>
        </authorList>
    </citation>
    <scope>NUCLEOTIDE SEQUENCE [LARGE SCALE GENOMIC DNA]</scope>
    <source>
        <strain>ATCC 35110 / GB-78</strain>
    </source>
</reference>
<dbReference type="EMBL" id="CP001100">
    <property type="protein sequence ID" value="ACF13575.1"/>
    <property type="molecule type" value="Genomic_DNA"/>
</dbReference>
<dbReference type="RefSeq" id="WP_012499659.1">
    <property type="nucleotide sequence ID" value="NC_011026.1"/>
</dbReference>
<dbReference type="SMR" id="B3QYE7"/>
<dbReference type="STRING" id="517418.Ctha_1111"/>
<dbReference type="KEGG" id="cts:Ctha_1111"/>
<dbReference type="eggNOG" id="COG0099">
    <property type="taxonomic scope" value="Bacteria"/>
</dbReference>
<dbReference type="HOGENOM" id="CLU_103849_1_2_10"/>
<dbReference type="OrthoDB" id="9803610at2"/>
<dbReference type="Proteomes" id="UP000001208">
    <property type="component" value="Chromosome"/>
</dbReference>
<dbReference type="GO" id="GO:0005829">
    <property type="term" value="C:cytosol"/>
    <property type="evidence" value="ECO:0007669"/>
    <property type="project" value="TreeGrafter"/>
</dbReference>
<dbReference type="GO" id="GO:0015935">
    <property type="term" value="C:small ribosomal subunit"/>
    <property type="evidence" value="ECO:0007669"/>
    <property type="project" value="TreeGrafter"/>
</dbReference>
<dbReference type="GO" id="GO:0019843">
    <property type="term" value="F:rRNA binding"/>
    <property type="evidence" value="ECO:0007669"/>
    <property type="project" value="UniProtKB-UniRule"/>
</dbReference>
<dbReference type="GO" id="GO:0003735">
    <property type="term" value="F:structural constituent of ribosome"/>
    <property type="evidence" value="ECO:0007669"/>
    <property type="project" value="InterPro"/>
</dbReference>
<dbReference type="GO" id="GO:0000049">
    <property type="term" value="F:tRNA binding"/>
    <property type="evidence" value="ECO:0007669"/>
    <property type="project" value="UniProtKB-UniRule"/>
</dbReference>
<dbReference type="GO" id="GO:0006412">
    <property type="term" value="P:translation"/>
    <property type="evidence" value="ECO:0007669"/>
    <property type="project" value="UniProtKB-UniRule"/>
</dbReference>
<dbReference type="FunFam" id="1.10.8.50:FF:000001">
    <property type="entry name" value="30S ribosomal protein S13"/>
    <property type="match status" value="1"/>
</dbReference>
<dbReference type="FunFam" id="4.10.910.10:FF:000001">
    <property type="entry name" value="30S ribosomal protein S13"/>
    <property type="match status" value="1"/>
</dbReference>
<dbReference type="Gene3D" id="1.10.8.50">
    <property type="match status" value="1"/>
</dbReference>
<dbReference type="Gene3D" id="4.10.910.10">
    <property type="entry name" value="30s ribosomal protein s13, domain 2"/>
    <property type="match status" value="1"/>
</dbReference>
<dbReference type="HAMAP" id="MF_01315">
    <property type="entry name" value="Ribosomal_uS13"/>
    <property type="match status" value="1"/>
</dbReference>
<dbReference type="InterPro" id="IPR027437">
    <property type="entry name" value="Rbsml_uS13_C"/>
</dbReference>
<dbReference type="InterPro" id="IPR001892">
    <property type="entry name" value="Ribosomal_uS13"/>
</dbReference>
<dbReference type="InterPro" id="IPR010979">
    <property type="entry name" value="Ribosomal_uS13-like_H2TH"/>
</dbReference>
<dbReference type="InterPro" id="IPR019980">
    <property type="entry name" value="Ribosomal_uS13_bac-type"/>
</dbReference>
<dbReference type="NCBIfam" id="TIGR03631">
    <property type="entry name" value="uS13_bact"/>
    <property type="match status" value="1"/>
</dbReference>
<dbReference type="PANTHER" id="PTHR10871">
    <property type="entry name" value="30S RIBOSOMAL PROTEIN S13/40S RIBOSOMAL PROTEIN S18"/>
    <property type="match status" value="1"/>
</dbReference>
<dbReference type="PANTHER" id="PTHR10871:SF1">
    <property type="entry name" value="SMALL RIBOSOMAL SUBUNIT PROTEIN US13M"/>
    <property type="match status" value="1"/>
</dbReference>
<dbReference type="Pfam" id="PF00416">
    <property type="entry name" value="Ribosomal_S13"/>
    <property type="match status" value="1"/>
</dbReference>
<dbReference type="PIRSF" id="PIRSF002134">
    <property type="entry name" value="Ribosomal_S13"/>
    <property type="match status" value="1"/>
</dbReference>
<dbReference type="SUPFAM" id="SSF46946">
    <property type="entry name" value="S13-like H2TH domain"/>
    <property type="match status" value="1"/>
</dbReference>
<dbReference type="PROSITE" id="PS50159">
    <property type="entry name" value="RIBOSOMAL_S13_2"/>
    <property type="match status" value="1"/>
</dbReference>
<proteinExistence type="inferred from homology"/>
<organism>
    <name type="scientific">Chloroherpeton thalassium (strain ATCC 35110 / GB-78)</name>
    <dbReference type="NCBI Taxonomy" id="517418"/>
    <lineage>
        <taxon>Bacteria</taxon>
        <taxon>Pseudomonadati</taxon>
        <taxon>Chlorobiota</taxon>
        <taxon>Chlorobiia</taxon>
        <taxon>Chlorobiales</taxon>
        <taxon>Chloroherpetonaceae</taxon>
        <taxon>Chloroherpeton</taxon>
    </lineage>
</organism>
<sequence>MRIAGVDLPRNKHVVIGLTYVYGIGRTTAKKILAKAGVPEDKKVSEVTDDEANEIRTIVTNEYKVEGQARSEQQLAIKRLMDIGCYRGLRHRRGLPARGQRTRTNARTRKGKRKTVAGKKKAGKK</sequence>
<keyword id="KW-1185">Reference proteome</keyword>
<keyword id="KW-0687">Ribonucleoprotein</keyword>
<keyword id="KW-0689">Ribosomal protein</keyword>
<keyword id="KW-0694">RNA-binding</keyword>
<keyword id="KW-0699">rRNA-binding</keyword>
<keyword id="KW-0820">tRNA-binding</keyword>
<gene>
    <name evidence="1" type="primary">rpsM</name>
    <name type="ordered locus">Ctha_1111</name>
</gene>